<reference key="1">
    <citation type="journal article" date="2004" name="Proc. Natl. Acad. Sci. U.S.A.">
        <title>Complete genomes of two clinical Staphylococcus aureus strains: evidence for the rapid evolution of virulence and drug resistance.</title>
        <authorList>
            <person name="Holden M.T.G."/>
            <person name="Feil E.J."/>
            <person name="Lindsay J.A."/>
            <person name="Peacock S.J."/>
            <person name="Day N.P.J."/>
            <person name="Enright M.C."/>
            <person name="Foster T.J."/>
            <person name="Moore C.E."/>
            <person name="Hurst L."/>
            <person name="Atkin R."/>
            <person name="Barron A."/>
            <person name="Bason N."/>
            <person name="Bentley S.D."/>
            <person name="Chillingworth C."/>
            <person name="Chillingworth T."/>
            <person name="Churcher C."/>
            <person name="Clark L."/>
            <person name="Corton C."/>
            <person name="Cronin A."/>
            <person name="Doggett J."/>
            <person name="Dowd L."/>
            <person name="Feltwell T."/>
            <person name="Hance Z."/>
            <person name="Harris B."/>
            <person name="Hauser H."/>
            <person name="Holroyd S."/>
            <person name="Jagels K."/>
            <person name="James K.D."/>
            <person name="Lennard N."/>
            <person name="Line A."/>
            <person name="Mayes R."/>
            <person name="Moule S."/>
            <person name="Mungall K."/>
            <person name="Ormond D."/>
            <person name="Quail M.A."/>
            <person name="Rabbinowitsch E."/>
            <person name="Rutherford K.M."/>
            <person name="Sanders M."/>
            <person name="Sharp S."/>
            <person name="Simmonds M."/>
            <person name="Stevens K."/>
            <person name="Whitehead S."/>
            <person name="Barrell B.G."/>
            <person name="Spratt B.G."/>
            <person name="Parkhill J."/>
        </authorList>
    </citation>
    <scope>NUCLEOTIDE SEQUENCE [LARGE SCALE GENOMIC DNA]</scope>
    <source>
        <strain>MSSA476</strain>
    </source>
</reference>
<proteinExistence type="inferred from homology"/>
<comment type="function">
    <text evidence="1">IF-3 binds to the 30S ribosomal subunit and shifts the equilibrium between 70S ribosomes and their 50S and 30S subunits in favor of the free subunits, thus enhancing the availability of 30S subunits on which protein synthesis initiation begins.</text>
</comment>
<comment type="subunit">
    <text evidence="1">Monomer.</text>
</comment>
<comment type="subcellular location">
    <subcellularLocation>
        <location evidence="1">Cytoplasm</location>
    </subcellularLocation>
</comment>
<comment type="similarity">
    <text evidence="1">Belongs to the IF-3 family.</text>
</comment>
<evidence type="ECO:0000255" key="1">
    <source>
        <dbReference type="HAMAP-Rule" id="MF_00080"/>
    </source>
</evidence>
<dbReference type="EMBL" id="BX571857">
    <property type="protein sequence ID" value="CAG43411.1"/>
    <property type="molecule type" value="Genomic_DNA"/>
</dbReference>
<dbReference type="RefSeq" id="WP_001791162.1">
    <property type="nucleotide sequence ID" value="NC_002953.3"/>
</dbReference>
<dbReference type="SMR" id="Q6G8P5"/>
<dbReference type="GeneID" id="66839860"/>
<dbReference type="KEGG" id="sas:SAS1609"/>
<dbReference type="HOGENOM" id="CLU_054919_3_2_9"/>
<dbReference type="GO" id="GO:0005829">
    <property type="term" value="C:cytosol"/>
    <property type="evidence" value="ECO:0007669"/>
    <property type="project" value="TreeGrafter"/>
</dbReference>
<dbReference type="GO" id="GO:0016020">
    <property type="term" value="C:membrane"/>
    <property type="evidence" value="ECO:0007669"/>
    <property type="project" value="TreeGrafter"/>
</dbReference>
<dbReference type="GO" id="GO:0043022">
    <property type="term" value="F:ribosome binding"/>
    <property type="evidence" value="ECO:0007669"/>
    <property type="project" value="TreeGrafter"/>
</dbReference>
<dbReference type="GO" id="GO:0003743">
    <property type="term" value="F:translation initiation factor activity"/>
    <property type="evidence" value="ECO:0007669"/>
    <property type="project" value="UniProtKB-UniRule"/>
</dbReference>
<dbReference type="GO" id="GO:0032790">
    <property type="term" value="P:ribosome disassembly"/>
    <property type="evidence" value="ECO:0007669"/>
    <property type="project" value="TreeGrafter"/>
</dbReference>
<dbReference type="FunFam" id="3.10.20.80:FF:000001">
    <property type="entry name" value="Translation initiation factor IF-3"/>
    <property type="match status" value="1"/>
</dbReference>
<dbReference type="FunFam" id="3.30.110.10:FF:000001">
    <property type="entry name" value="Translation initiation factor IF-3"/>
    <property type="match status" value="1"/>
</dbReference>
<dbReference type="Gene3D" id="3.30.110.10">
    <property type="entry name" value="Translation initiation factor 3 (IF-3), C-terminal domain"/>
    <property type="match status" value="1"/>
</dbReference>
<dbReference type="Gene3D" id="3.10.20.80">
    <property type="entry name" value="Translation initiation factor 3 (IF-3), N-terminal domain"/>
    <property type="match status" value="1"/>
</dbReference>
<dbReference type="HAMAP" id="MF_00080">
    <property type="entry name" value="IF_3"/>
    <property type="match status" value="1"/>
</dbReference>
<dbReference type="InterPro" id="IPR036788">
    <property type="entry name" value="T_IF-3_C_sf"/>
</dbReference>
<dbReference type="InterPro" id="IPR036787">
    <property type="entry name" value="T_IF-3_N_sf"/>
</dbReference>
<dbReference type="InterPro" id="IPR019813">
    <property type="entry name" value="Translation_initiation_fac3_CS"/>
</dbReference>
<dbReference type="InterPro" id="IPR001288">
    <property type="entry name" value="Translation_initiation_fac_3"/>
</dbReference>
<dbReference type="InterPro" id="IPR019815">
    <property type="entry name" value="Translation_initiation_fac_3_C"/>
</dbReference>
<dbReference type="InterPro" id="IPR019814">
    <property type="entry name" value="Translation_initiation_fac_3_N"/>
</dbReference>
<dbReference type="NCBIfam" id="TIGR00168">
    <property type="entry name" value="infC"/>
    <property type="match status" value="1"/>
</dbReference>
<dbReference type="PANTHER" id="PTHR10938">
    <property type="entry name" value="TRANSLATION INITIATION FACTOR IF-3"/>
    <property type="match status" value="1"/>
</dbReference>
<dbReference type="PANTHER" id="PTHR10938:SF0">
    <property type="entry name" value="TRANSLATION INITIATION FACTOR IF-3, MITOCHONDRIAL"/>
    <property type="match status" value="1"/>
</dbReference>
<dbReference type="Pfam" id="PF00707">
    <property type="entry name" value="IF3_C"/>
    <property type="match status" value="1"/>
</dbReference>
<dbReference type="Pfam" id="PF05198">
    <property type="entry name" value="IF3_N"/>
    <property type="match status" value="1"/>
</dbReference>
<dbReference type="SUPFAM" id="SSF55200">
    <property type="entry name" value="Translation initiation factor IF3, C-terminal domain"/>
    <property type="match status" value="1"/>
</dbReference>
<dbReference type="SUPFAM" id="SSF54364">
    <property type="entry name" value="Translation initiation factor IF3, N-terminal domain"/>
    <property type="match status" value="1"/>
</dbReference>
<dbReference type="PROSITE" id="PS00938">
    <property type="entry name" value="IF3"/>
    <property type="match status" value="1"/>
</dbReference>
<gene>
    <name evidence="1" type="primary">infC</name>
    <name type="ordered locus">SAS1609</name>
</gene>
<keyword id="KW-0963">Cytoplasm</keyword>
<keyword id="KW-0396">Initiation factor</keyword>
<keyword id="KW-0648">Protein biosynthesis</keyword>
<protein>
    <recommendedName>
        <fullName evidence="1">Translation initiation factor IF-3</fullName>
    </recommendedName>
</protein>
<accession>Q6G8P5</accession>
<sequence>MSTIAKDQTQINDKIRAKELRLIGQDGEQIGVKSKREALEMAERVDLDLVVVAPNAKPPVARIMDYGKFKFEQQKKEKEMKKKQKIINVKEIRLSPTIEEHDFQTKLKNGRKFLTKGDKCKVSIRFRGRAITHKEIGQRVLEKYADECKDIATVEQKPKMDGRQMFIMLAPTAEK</sequence>
<organism>
    <name type="scientific">Staphylococcus aureus (strain MSSA476)</name>
    <dbReference type="NCBI Taxonomy" id="282459"/>
    <lineage>
        <taxon>Bacteria</taxon>
        <taxon>Bacillati</taxon>
        <taxon>Bacillota</taxon>
        <taxon>Bacilli</taxon>
        <taxon>Bacillales</taxon>
        <taxon>Staphylococcaceae</taxon>
        <taxon>Staphylococcus</taxon>
    </lineage>
</organism>
<feature type="chain" id="PRO_0000177579" description="Translation initiation factor IF-3">
    <location>
        <begin position="1"/>
        <end position="175"/>
    </location>
</feature>
<name>IF3_STAAS</name>